<keyword id="KW-0963">Cytoplasm</keyword>
<keyword id="KW-0274">FAD</keyword>
<keyword id="KW-0285">Flavoprotein</keyword>
<keyword id="KW-0547">Nucleotide-binding</keyword>
<keyword id="KW-0560">Oxidoreductase</keyword>
<keyword id="KW-0662">Pyridine nucleotide biosynthesis</keyword>
<sequence length="277" mass="28540">ILVDAQGRRFMTALDPAAELAPRDVVTRGVAAAIKAGKGAFLDARTALGAAFPQAFPTVYAACRASGIDPVRQPIPIAPAAHYHMGGVLTDSFGRTSIDGLWAVGEVACTGAHGANRLASNSLLEAVVFAARVAGDVGAAPLRRGWPPPAPPDLSPRPPPAEDAAAITRLRATMSARVGVIRDGQGLESALATIETIAAGARSPRLRAMTTAARLITAAALARRESRGAHFRADYPATDPAQSHRATAPFGPLRTVPPHPAQSLGEGLAAPPMETRS</sequence>
<gene>
    <name type="primary">nadB</name>
</gene>
<accession>Q59767</accession>
<name>NADB_RHORU</name>
<feature type="chain" id="PRO_0000184398" description="L-aspartate oxidase">
    <location>
        <begin position="1" status="less than"/>
        <end position="277"/>
    </location>
</feature>
<feature type="region of interest" description="Disordered" evidence="2">
    <location>
        <begin position="142"/>
        <end position="161"/>
    </location>
</feature>
<feature type="region of interest" description="Disordered" evidence="2">
    <location>
        <begin position="234"/>
        <end position="277"/>
    </location>
</feature>
<feature type="compositionally biased region" description="Pro residues" evidence="2">
    <location>
        <begin position="146"/>
        <end position="161"/>
    </location>
</feature>
<feature type="active site" description="Proton donor/acceptor" evidence="1">
    <location>
        <position position="23"/>
    </location>
</feature>
<feature type="binding site" evidence="1">
    <location>
        <position position="106"/>
    </location>
    <ligand>
        <name>FAD</name>
        <dbReference type="ChEBI" id="CHEBI:57692"/>
    </ligand>
</feature>
<feature type="binding site" evidence="1">
    <location>
        <begin position="122"/>
        <end position="123"/>
    </location>
    <ligand>
        <name>FAD</name>
        <dbReference type="ChEBI" id="CHEBI:57692"/>
    </ligand>
</feature>
<feature type="non-terminal residue">
    <location>
        <position position="1"/>
    </location>
</feature>
<evidence type="ECO:0000250" key="1">
    <source>
        <dbReference type="UniProtKB" id="P10902"/>
    </source>
</evidence>
<evidence type="ECO:0000256" key="2">
    <source>
        <dbReference type="SAM" id="MobiDB-lite"/>
    </source>
</evidence>
<evidence type="ECO:0000305" key="3"/>
<dbReference type="EC" id="1.4.3.16" evidence="1"/>
<dbReference type="EMBL" id="U65510">
    <property type="protein sequence ID" value="AAC45129.1"/>
    <property type="molecule type" value="Genomic_DNA"/>
</dbReference>
<dbReference type="PIR" id="T51327">
    <property type="entry name" value="T51327"/>
</dbReference>
<dbReference type="SMR" id="Q59767"/>
<dbReference type="UniPathway" id="UPA00253">
    <property type="reaction ID" value="UER00326"/>
</dbReference>
<dbReference type="GO" id="GO:0005737">
    <property type="term" value="C:cytoplasm"/>
    <property type="evidence" value="ECO:0007669"/>
    <property type="project" value="UniProtKB-SubCell"/>
</dbReference>
<dbReference type="GO" id="GO:0008734">
    <property type="term" value="F:L-aspartate oxidase activity"/>
    <property type="evidence" value="ECO:0007669"/>
    <property type="project" value="UniProtKB-EC"/>
</dbReference>
<dbReference type="GO" id="GO:0000166">
    <property type="term" value="F:nucleotide binding"/>
    <property type="evidence" value="ECO:0007669"/>
    <property type="project" value="UniProtKB-KW"/>
</dbReference>
<dbReference type="GO" id="GO:0034628">
    <property type="term" value="P:'de novo' NAD biosynthetic process from L-aspartate"/>
    <property type="evidence" value="ECO:0007669"/>
    <property type="project" value="TreeGrafter"/>
</dbReference>
<dbReference type="GO" id="GO:0009435">
    <property type="term" value="P:NAD biosynthetic process"/>
    <property type="evidence" value="ECO:0000315"/>
    <property type="project" value="CACAO"/>
</dbReference>
<dbReference type="Gene3D" id="3.50.50.60">
    <property type="entry name" value="FAD/NAD(P)-binding domain"/>
    <property type="match status" value="1"/>
</dbReference>
<dbReference type="Gene3D" id="1.20.58.100">
    <property type="entry name" value="Fumarate reductase/succinate dehydrogenase flavoprotein-like, C-terminal domain"/>
    <property type="match status" value="1"/>
</dbReference>
<dbReference type="Gene3D" id="3.90.700.10">
    <property type="entry name" value="Succinate dehydrogenase/fumarate reductase flavoprotein, catalytic domain"/>
    <property type="match status" value="1"/>
</dbReference>
<dbReference type="InterPro" id="IPR003953">
    <property type="entry name" value="FAD-dep_OxRdtase_2_FAD-bd"/>
</dbReference>
<dbReference type="InterPro" id="IPR036188">
    <property type="entry name" value="FAD/NAD-bd_sf"/>
</dbReference>
<dbReference type="InterPro" id="IPR037099">
    <property type="entry name" value="Fum_R/Succ_DH_flav-like_C_sf"/>
</dbReference>
<dbReference type="InterPro" id="IPR015939">
    <property type="entry name" value="Fum_Rdtase/Succ_DH_flav-like_C"/>
</dbReference>
<dbReference type="InterPro" id="IPR005288">
    <property type="entry name" value="NadB"/>
</dbReference>
<dbReference type="InterPro" id="IPR027477">
    <property type="entry name" value="Succ_DH/fumarate_Rdtase_cat_sf"/>
</dbReference>
<dbReference type="PANTHER" id="PTHR42716">
    <property type="entry name" value="L-ASPARTATE OXIDASE"/>
    <property type="match status" value="1"/>
</dbReference>
<dbReference type="PANTHER" id="PTHR42716:SF2">
    <property type="entry name" value="L-ASPARTATE OXIDASE, CHLOROPLASTIC"/>
    <property type="match status" value="1"/>
</dbReference>
<dbReference type="Pfam" id="PF00890">
    <property type="entry name" value="FAD_binding_2"/>
    <property type="match status" value="1"/>
</dbReference>
<dbReference type="Pfam" id="PF02910">
    <property type="entry name" value="Succ_DH_flav_C"/>
    <property type="match status" value="1"/>
</dbReference>
<dbReference type="SUPFAM" id="SSF51905">
    <property type="entry name" value="FAD/NAD(P)-binding domain"/>
    <property type="match status" value="1"/>
</dbReference>
<dbReference type="SUPFAM" id="SSF46977">
    <property type="entry name" value="Succinate dehydrogenase/fumarate reductase flavoprotein C-terminal domain"/>
    <property type="match status" value="1"/>
</dbReference>
<dbReference type="SUPFAM" id="SSF56425">
    <property type="entry name" value="Succinate dehydrogenase/fumarate reductase flavoprotein, catalytic domain"/>
    <property type="match status" value="1"/>
</dbReference>
<organism>
    <name type="scientific">Rhodospirillum rubrum</name>
    <dbReference type="NCBI Taxonomy" id="1085"/>
    <lineage>
        <taxon>Bacteria</taxon>
        <taxon>Pseudomonadati</taxon>
        <taxon>Pseudomonadota</taxon>
        <taxon>Alphaproteobacteria</taxon>
        <taxon>Rhodospirillales</taxon>
        <taxon>Rhodospirillaceae</taxon>
        <taxon>Rhodospirillum</taxon>
    </lineage>
</organism>
<proteinExistence type="inferred from homology"/>
<reference key="1">
    <citation type="journal article" date="1995" name="J. Bacteriol.">
        <title>Carbon monoxide-induced activation of gene expression in Rhodospirillum rubrum requires the product of cooA, a member of the cyclic AMP receptor protein family of transcriptional regulators.</title>
        <authorList>
            <person name="Shelver D."/>
            <person name="Kerby R.L."/>
            <person name="He Y."/>
            <person name="Roberts G.P."/>
        </authorList>
    </citation>
    <scope>NUCLEOTIDE SEQUENCE [GENOMIC DNA]</scope>
    <source>
        <strain>UR1</strain>
    </source>
</reference>
<protein>
    <recommendedName>
        <fullName evidence="1">L-aspartate oxidase</fullName>
        <shortName evidence="1">LASPO</shortName>
        <ecNumber evidence="1">1.4.3.16</ecNumber>
    </recommendedName>
    <alternativeName>
        <fullName>Quinolinate synthase B</fullName>
    </alternativeName>
</protein>
<comment type="function">
    <text evidence="1">Catalyzes the oxidation of L-aspartate to iminoaspartate, the first step in the de novo biosynthesis of NAD(+).</text>
</comment>
<comment type="catalytic activity">
    <reaction evidence="1">
        <text>L-aspartate + O2 = iminosuccinate + H2O2</text>
        <dbReference type="Rhea" id="RHEA:25876"/>
        <dbReference type="ChEBI" id="CHEBI:15379"/>
        <dbReference type="ChEBI" id="CHEBI:16240"/>
        <dbReference type="ChEBI" id="CHEBI:29991"/>
        <dbReference type="ChEBI" id="CHEBI:77875"/>
        <dbReference type="EC" id="1.4.3.16"/>
    </reaction>
    <physiologicalReaction direction="left-to-right" evidence="1">
        <dbReference type="Rhea" id="RHEA:25877"/>
    </physiologicalReaction>
</comment>
<comment type="cofactor">
    <cofactor evidence="1">
        <name>FAD</name>
        <dbReference type="ChEBI" id="CHEBI:57692"/>
    </cofactor>
    <text evidence="1">Binds 1 FAD per subunit.</text>
</comment>
<comment type="pathway">
    <text evidence="1">Cofactor biosynthesis; NAD(+) biosynthesis; iminoaspartate from L-aspartate (oxidase route): step 1/1.</text>
</comment>
<comment type="subcellular location">
    <subcellularLocation>
        <location evidence="1">Cytoplasm</location>
    </subcellularLocation>
</comment>
<comment type="similarity">
    <text evidence="3">Belongs to the FAD-dependent oxidoreductase 2 family. NadB subfamily.</text>
</comment>